<reference key="1">
    <citation type="journal article" date="2005" name="Proc. Natl. Acad. Sci. U.S.A.">
        <title>The psychrophilic lifestyle as revealed by the genome sequence of Colwellia psychrerythraea 34H through genomic and proteomic analyses.</title>
        <authorList>
            <person name="Methe B.A."/>
            <person name="Nelson K.E."/>
            <person name="Deming J.W."/>
            <person name="Momen B."/>
            <person name="Melamud E."/>
            <person name="Zhang X."/>
            <person name="Moult J."/>
            <person name="Madupu R."/>
            <person name="Nelson W.C."/>
            <person name="Dodson R.J."/>
            <person name="Brinkac L.M."/>
            <person name="Daugherty S.C."/>
            <person name="Durkin A.S."/>
            <person name="DeBoy R.T."/>
            <person name="Kolonay J.F."/>
            <person name="Sullivan S.A."/>
            <person name="Zhou L."/>
            <person name="Davidsen T.M."/>
            <person name="Wu M."/>
            <person name="Huston A.L."/>
            <person name="Lewis M."/>
            <person name="Weaver B."/>
            <person name="Weidman J.F."/>
            <person name="Khouri H."/>
            <person name="Utterback T.R."/>
            <person name="Feldblyum T.V."/>
            <person name="Fraser C.M."/>
        </authorList>
    </citation>
    <scope>NUCLEOTIDE SEQUENCE [LARGE SCALE GENOMIC DNA]</scope>
    <source>
        <strain>34H / ATCC BAA-681</strain>
    </source>
</reference>
<comment type="catalytic activity">
    <reaction>
        <text>an acyl phosphate + H2O = a carboxylate + phosphate + H(+)</text>
        <dbReference type="Rhea" id="RHEA:14965"/>
        <dbReference type="ChEBI" id="CHEBI:15377"/>
        <dbReference type="ChEBI" id="CHEBI:15378"/>
        <dbReference type="ChEBI" id="CHEBI:29067"/>
        <dbReference type="ChEBI" id="CHEBI:43474"/>
        <dbReference type="ChEBI" id="CHEBI:59918"/>
        <dbReference type="EC" id="3.6.1.7"/>
    </reaction>
</comment>
<comment type="similarity">
    <text evidence="2">Belongs to the acylphosphatase family.</text>
</comment>
<evidence type="ECO:0000255" key="1">
    <source>
        <dbReference type="PROSITE-ProRule" id="PRU00520"/>
    </source>
</evidence>
<evidence type="ECO:0000305" key="2"/>
<protein>
    <recommendedName>
        <fullName>Acylphosphatase</fullName>
        <ecNumber>3.6.1.7</ecNumber>
    </recommendedName>
    <alternativeName>
        <fullName>Acylphosphate phosphohydrolase</fullName>
    </alternativeName>
</protein>
<dbReference type="EC" id="3.6.1.7"/>
<dbReference type="EMBL" id="CP000083">
    <property type="protein sequence ID" value="AAZ25130.1"/>
    <property type="molecule type" value="Genomic_DNA"/>
</dbReference>
<dbReference type="RefSeq" id="WP_011043067.1">
    <property type="nucleotide sequence ID" value="NC_003910.7"/>
</dbReference>
<dbReference type="SMR" id="Q482P4"/>
<dbReference type="STRING" id="167879.CPS_2248"/>
<dbReference type="KEGG" id="cps:CPS_2248"/>
<dbReference type="eggNOG" id="COG1254">
    <property type="taxonomic scope" value="Bacteria"/>
</dbReference>
<dbReference type="HOGENOM" id="CLU_141932_1_2_6"/>
<dbReference type="Proteomes" id="UP000000547">
    <property type="component" value="Chromosome"/>
</dbReference>
<dbReference type="GO" id="GO:0003998">
    <property type="term" value="F:acylphosphatase activity"/>
    <property type="evidence" value="ECO:0007669"/>
    <property type="project" value="UniProtKB-EC"/>
</dbReference>
<dbReference type="Gene3D" id="3.30.70.100">
    <property type="match status" value="1"/>
</dbReference>
<dbReference type="InterPro" id="IPR020456">
    <property type="entry name" value="Acylphosphatase"/>
</dbReference>
<dbReference type="InterPro" id="IPR001792">
    <property type="entry name" value="Acylphosphatase-like_dom"/>
</dbReference>
<dbReference type="InterPro" id="IPR036046">
    <property type="entry name" value="Acylphosphatase-like_dom_sf"/>
</dbReference>
<dbReference type="InterPro" id="IPR017968">
    <property type="entry name" value="Acylphosphatase_CS"/>
</dbReference>
<dbReference type="NCBIfam" id="NF011000">
    <property type="entry name" value="PRK14426.1"/>
    <property type="match status" value="1"/>
</dbReference>
<dbReference type="NCBIfam" id="NF011022">
    <property type="entry name" value="PRK14451.1"/>
    <property type="match status" value="1"/>
</dbReference>
<dbReference type="PANTHER" id="PTHR47268">
    <property type="entry name" value="ACYLPHOSPHATASE"/>
    <property type="match status" value="1"/>
</dbReference>
<dbReference type="PANTHER" id="PTHR47268:SF4">
    <property type="entry name" value="ACYLPHOSPHATASE"/>
    <property type="match status" value="1"/>
</dbReference>
<dbReference type="Pfam" id="PF00708">
    <property type="entry name" value="Acylphosphatase"/>
    <property type="match status" value="1"/>
</dbReference>
<dbReference type="SUPFAM" id="SSF54975">
    <property type="entry name" value="Acylphosphatase/BLUF domain-like"/>
    <property type="match status" value="1"/>
</dbReference>
<dbReference type="PROSITE" id="PS00150">
    <property type="entry name" value="ACYLPHOSPHATASE_1"/>
    <property type="match status" value="1"/>
</dbReference>
<dbReference type="PROSITE" id="PS00151">
    <property type="entry name" value="ACYLPHOSPHATASE_2"/>
    <property type="match status" value="1"/>
</dbReference>
<dbReference type="PROSITE" id="PS51160">
    <property type="entry name" value="ACYLPHOSPHATASE_3"/>
    <property type="match status" value="1"/>
</dbReference>
<name>ACYP_COLP3</name>
<keyword id="KW-0378">Hydrolase</keyword>
<sequence length="89" mass="10102">MNVSYIAHISGRVQGVYFRASSQQQAIEYSLSGYARNLADGDVEVLLCGDEENIEKMLLWLAHGPEQAKVTEIQHEKVPWQEHHFFSIG</sequence>
<organism>
    <name type="scientific">Colwellia psychrerythraea (strain 34H / ATCC BAA-681)</name>
    <name type="common">Vibrio psychroerythus</name>
    <dbReference type="NCBI Taxonomy" id="167879"/>
    <lineage>
        <taxon>Bacteria</taxon>
        <taxon>Pseudomonadati</taxon>
        <taxon>Pseudomonadota</taxon>
        <taxon>Gammaproteobacteria</taxon>
        <taxon>Alteromonadales</taxon>
        <taxon>Colwelliaceae</taxon>
        <taxon>Colwellia</taxon>
    </lineage>
</organism>
<feature type="chain" id="PRO_0000326688" description="Acylphosphatase">
    <location>
        <begin position="1"/>
        <end position="89"/>
    </location>
</feature>
<feature type="domain" description="Acylphosphatase-like" evidence="1">
    <location>
        <begin position="4"/>
        <end position="89"/>
    </location>
</feature>
<feature type="active site" evidence="1">
    <location>
        <position position="19"/>
    </location>
</feature>
<feature type="active site" evidence="1">
    <location>
        <position position="37"/>
    </location>
</feature>
<proteinExistence type="inferred from homology"/>
<gene>
    <name type="primary">acyP</name>
    <name type="ordered locus">CPS_2248</name>
</gene>
<accession>Q482P4</accession>